<dbReference type="EC" id="4.6.1.-" evidence="5"/>
<dbReference type="EMBL" id="EF535254">
    <property type="protein sequence ID" value="ABU43333.1"/>
    <property type="molecule type" value="mRNA"/>
</dbReference>
<dbReference type="SMR" id="B2KKW0"/>
<dbReference type="ArachnoServer" id="AS000561">
    <property type="toxin name" value="Sphingomyelinase D (LiSicTox-alphaII2)"/>
</dbReference>
<dbReference type="GO" id="GO:0005576">
    <property type="term" value="C:extracellular region"/>
    <property type="evidence" value="ECO:0007669"/>
    <property type="project" value="UniProtKB-SubCell"/>
</dbReference>
<dbReference type="GO" id="GO:0016829">
    <property type="term" value="F:lyase activity"/>
    <property type="evidence" value="ECO:0007669"/>
    <property type="project" value="UniProtKB-KW"/>
</dbReference>
<dbReference type="GO" id="GO:0046872">
    <property type="term" value="F:metal ion binding"/>
    <property type="evidence" value="ECO:0007669"/>
    <property type="project" value="UniProtKB-KW"/>
</dbReference>
<dbReference type="GO" id="GO:0008081">
    <property type="term" value="F:phosphoric diester hydrolase activity"/>
    <property type="evidence" value="ECO:0007669"/>
    <property type="project" value="InterPro"/>
</dbReference>
<dbReference type="GO" id="GO:0090729">
    <property type="term" value="F:toxin activity"/>
    <property type="evidence" value="ECO:0007669"/>
    <property type="project" value="UniProtKB-KW"/>
</dbReference>
<dbReference type="GO" id="GO:0031640">
    <property type="term" value="P:killing of cells of another organism"/>
    <property type="evidence" value="ECO:0007669"/>
    <property type="project" value="UniProtKB-KW"/>
</dbReference>
<dbReference type="GO" id="GO:0016042">
    <property type="term" value="P:lipid catabolic process"/>
    <property type="evidence" value="ECO:0007669"/>
    <property type="project" value="UniProtKB-KW"/>
</dbReference>
<dbReference type="CDD" id="cd08576">
    <property type="entry name" value="GDPD_like_SMaseD_PLD"/>
    <property type="match status" value="1"/>
</dbReference>
<dbReference type="Gene3D" id="3.20.20.190">
    <property type="entry name" value="Phosphatidylinositol (PI) phosphodiesterase"/>
    <property type="match status" value="1"/>
</dbReference>
<dbReference type="InterPro" id="IPR017946">
    <property type="entry name" value="PLC-like_Pdiesterase_TIM-brl"/>
</dbReference>
<dbReference type="SUPFAM" id="SSF51695">
    <property type="entry name" value="PLC-like phosphodiesterases"/>
    <property type="match status" value="1"/>
</dbReference>
<organism>
    <name type="scientific">Loxosceles intermedia</name>
    <name type="common">Brown spider</name>
    <dbReference type="NCBI Taxonomy" id="58218"/>
    <lineage>
        <taxon>Eukaryota</taxon>
        <taxon>Metazoa</taxon>
        <taxon>Ecdysozoa</taxon>
        <taxon>Arthropoda</taxon>
        <taxon>Chelicerata</taxon>
        <taxon>Arachnida</taxon>
        <taxon>Araneae</taxon>
        <taxon>Araneomorphae</taxon>
        <taxon>Haplogynae</taxon>
        <taxon>Scytodoidea</taxon>
        <taxon>Sicariidae</taxon>
        <taxon>Loxosceles</taxon>
    </lineage>
</organism>
<proteinExistence type="evidence at transcript level"/>
<comment type="function">
    <text evidence="2 4">Dermonecrotic toxins cleave the phosphodiester linkage between the phosphate and headgroup of certain phospholipids (sphingolipid and lysolipid substrates), forming an alcohol (often choline) and a cyclic phosphate (By similarity). This toxin acts on sphingomyelin (SM) (By similarity). It may also act on ceramide phosphoethanolamine (CPE), lysophosphatidylcholine (LPC) and lysophosphatidylethanolamine (LPE), but not on lysophosphatidylserine (LPS), and lysophosphatidylglycerol (LPG) (By similarity). It acts by transphosphatidylation, releasing exclusively cyclic phosphate products as second products (By similarity). Induces dermonecrosis, hemolysis, increased vascular permeability, edema, inflammatory response, and platelet aggregation (By similarity).</text>
</comment>
<comment type="catalytic activity">
    <reaction evidence="2">
        <text>an N-(acyl)-sphingosylphosphocholine = an N-(acyl)-sphingosyl-1,3-cyclic phosphate + choline</text>
        <dbReference type="Rhea" id="RHEA:60652"/>
        <dbReference type="ChEBI" id="CHEBI:15354"/>
        <dbReference type="ChEBI" id="CHEBI:64583"/>
        <dbReference type="ChEBI" id="CHEBI:143892"/>
    </reaction>
</comment>
<comment type="catalytic activity">
    <reaction evidence="2">
        <text>an N-(acyl)-sphingosylphosphoethanolamine = an N-(acyl)-sphingosyl-1,3-cyclic phosphate + ethanolamine</text>
        <dbReference type="Rhea" id="RHEA:60648"/>
        <dbReference type="ChEBI" id="CHEBI:57603"/>
        <dbReference type="ChEBI" id="CHEBI:143891"/>
        <dbReference type="ChEBI" id="CHEBI:143892"/>
    </reaction>
</comment>
<comment type="catalytic activity">
    <reaction evidence="2">
        <text>a 1-acyl-sn-glycero-3-phosphocholine = a 1-acyl-sn-glycero-2,3-cyclic phosphate + choline</text>
        <dbReference type="Rhea" id="RHEA:60700"/>
        <dbReference type="ChEBI" id="CHEBI:15354"/>
        <dbReference type="ChEBI" id="CHEBI:58168"/>
        <dbReference type="ChEBI" id="CHEBI:143947"/>
    </reaction>
</comment>
<comment type="catalytic activity">
    <reaction evidence="2">
        <text>a 1-acyl-sn-glycero-3-phosphoethanolamine = a 1-acyl-sn-glycero-2,3-cyclic phosphate + ethanolamine</text>
        <dbReference type="Rhea" id="RHEA:60704"/>
        <dbReference type="ChEBI" id="CHEBI:57603"/>
        <dbReference type="ChEBI" id="CHEBI:64381"/>
        <dbReference type="ChEBI" id="CHEBI:143947"/>
    </reaction>
</comment>
<comment type="cofactor">
    <cofactor evidence="6">
        <name>Mg(2+)</name>
        <dbReference type="ChEBI" id="CHEBI:18420"/>
    </cofactor>
    <text evidence="6">Binds 1 Mg(2+) ion per subunit.</text>
</comment>
<comment type="subcellular location">
    <subcellularLocation>
        <location evidence="9">Secreted</location>
    </subcellularLocation>
</comment>
<comment type="tissue specificity">
    <text evidence="9">Expressed by the venom gland.</text>
</comment>
<comment type="similarity">
    <text evidence="8">Belongs to the arthropod phospholipase D family. Class II subfamily.</text>
</comment>
<comment type="caution">
    <text evidence="2 3 5">The most common activity assay for dermonecrotic toxins detects enzymatic activity by monitoring choline release from substrate. Liberation of choline from sphingomyelin (SM) or lysophosphatidylcholine (LPC) is commonly assumed to result from substrate hydrolysis, giving either ceramide-1-phosphate (C1P) or lysophosphatidic acid (LPA), respectively, as a second product. However, two studies from Lajoie and colleagues (2013 and 2015) report the observation of exclusive formation of cyclic phosphate products as second products, resulting from intramolecular transphosphatidylation. Cyclic phosphates have vastly different biological properties from their monoester counterparts, and they may be relevant to the pathology of brown spider envenomation.</text>
</comment>
<evidence type="ECO:0000250" key="1"/>
<evidence type="ECO:0000250" key="2">
    <source>
        <dbReference type="UniProtKB" id="A0A0D4WTV1"/>
    </source>
</evidence>
<evidence type="ECO:0000250" key="3">
    <source>
        <dbReference type="UniProtKB" id="A0A0D4WV12"/>
    </source>
</evidence>
<evidence type="ECO:0000250" key="4">
    <source>
        <dbReference type="UniProtKB" id="P0CE80"/>
    </source>
</evidence>
<evidence type="ECO:0000250" key="5">
    <source>
        <dbReference type="UniProtKB" id="Q4ZFU2"/>
    </source>
</evidence>
<evidence type="ECO:0000250" key="6">
    <source>
        <dbReference type="UniProtKB" id="Q8I914"/>
    </source>
</evidence>
<evidence type="ECO:0000255" key="7"/>
<evidence type="ECO:0000305" key="8"/>
<evidence type="ECO:0000305" key="9">
    <source>
    </source>
</evidence>
<keyword id="KW-0204">Cytolysis</keyword>
<keyword id="KW-1061">Dermonecrotic toxin</keyword>
<keyword id="KW-1015">Disulfide bond</keyword>
<keyword id="KW-0325">Glycoprotein</keyword>
<keyword id="KW-0354">Hemolysis</keyword>
<keyword id="KW-0442">Lipid degradation</keyword>
<keyword id="KW-0443">Lipid metabolism</keyword>
<keyword id="KW-0456">Lyase</keyword>
<keyword id="KW-0460">Magnesium</keyword>
<keyword id="KW-0479">Metal-binding</keyword>
<keyword id="KW-0964">Secreted</keyword>
<keyword id="KW-0732">Signal</keyword>
<keyword id="KW-0800">Toxin</keyword>
<keyword id="KW-0865">Zymogen</keyword>
<accession>B2KKW0</accession>
<feature type="signal peptide" evidence="7">
    <location>
        <begin position="1"/>
        <end position="18"/>
    </location>
</feature>
<feature type="propeptide" id="PRO_0000380639" evidence="1">
    <location>
        <begin position="19"/>
        <end position="26"/>
    </location>
</feature>
<feature type="chain" id="PRO_0000380640" description="Dermonecrotic toxin LiSicTox-alphaII2">
    <location>
        <begin position="27"/>
        <end position="310"/>
    </location>
</feature>
<feature type="active site" evidence="6">
    <location>
        <position position="38"/>
    </location>
</feature>
<feature type="active site" description="Nucleophile" evidence="6">
    <location>
        <position position="74"/>
    </location>
</feature>
<feature type="binding site" evidence="6">
    <location>
        <position position="58"/>
    </location>
    <ligand>
        <name>Mg(2+)</name>
        <dbReference type="ChEBI" id="CHEBI:18420"/>
    </ligand>
</feature>
<feature type="binding site" evidence="6">
    <location>
        <position position="60"/>
    </location>
    <ligand>
        <name>Mg(2+)</name>
        <dbReference type="ChEBI" id="CHEBI:18420"/>
    </ligand>
</feature>
<feature type="binding site" evidence="6">
    <location>
        <position position="118"/>
    </location>
    <ligand>
        <name>Mg(2+)</name>
        <dbReference type="ChEBI" id="CHEBI:18420"/>
    </ligand>
</feature>
<feature type="glycosylation site" description="N-linked (GlcNAc...) asparagine" evidence="7">
    <location>
        <position position="99"/>
    </location>
</feature>
<feature type="disulfide bond" evidence="4">
    <location>
        <begin position="78"/>
        <end position="84"/>
    </location>
</feature>
<feature type="disulfide bond" evidence="4">
    <location>
        <begin position="80"/>
        <end position="224"/>
    </location>
</feature>
<name>A22_LOXIN</name>
<reference key="1">
    <citation type="journal article" date="2007" name="Toxicon">
        <title>The Loxtox protein family in Loxosceles intermedia (Mello-Leitao) venom.</title>
        <authorList>
            <person name="Kalapothakis E."/>
            <person name="Chatzaki M."/>
            <person name="Goncalves-Dornelas H."/>
            <person name="de Castro C.S."/>
            <person name="Silvestre F.G."/>
            <person name="Laborne F.V."/>
            <person name="de Moura J.F."/>
            <person name="Veiga S.S."/>
            <person name="Chavez-Olortegui C."/>
            <person name="Granier C."/>
            <person name="Barbaro K.C."/>
        </authorList>
    </citation>
    <scope>NUCLEOTIDE SEQUENCE [MRNA]</scope>
    <source>
        <tissue>Venom gland</tissue>
    </source>
</reference>
<protein>
    <recommendedName>
        <fullName>Dermonecrotic toxin LiSicTox-alphaII2</fullName>
        <ecNumber evidence="5">4.6.1.-</ecNumber>
    </recommendedName>
    <alternativeName>
        <fullName>Loxtox i5</fullName>
    </alternativeName>
    <alternativeName>
        <fullName>Phospholipase D</fullName>
        <shortName>PLD</shortName>
    </alternativeName>
    <alternativeName>
        <fullName>Sphingomyelin phosphodiesterase D</fullName>
        <shortName>SMD</shortName>
        <shortName>SMase D</shortName>
        <shortName>Sphingomyelinase D</shortName>
    </alternativeName>
</protein>
<sequence>MLLRIALILGCWSILSEGAENDIAEREDRKRPIWNMAHMVNAISQIHEFGALGANSIETDVSFDKNAKPEYTFHGIPCDCFRNCMNWEYFNHFLEGLRNATTPGNPKYRDRMILVVFDLKSNGLYYDAQARDAGKNLALSLLQNYWNNGDNGGRAYIVLSVPLLKHYELFQGFRETLKEQGHEELLEKVGYDFSGNDDISDIEEAYRLAGISEHIWQSDGITNCIYRGFDRVIQAVNAREKFEGIIKKVYFWTADKPSTVKLALGESVDGIMTNYPNVVVDVLKIDEYQQRFRFATIDDNPWEKYKPYGK</sequence>